<proteinExistence type="inferred from homology"/>
<gene>
    <name evidence="1" type="primary">thf1</name>
    <name type="ordered locus">NATL1_09631</name>
</gene>
<keyword id="KW-0175">Coiled coil</keyword>
<accession>A2C211</accession>
<sequence>MSVRATISDSKSDFHKEFPYVIPAIYRKLADELLVELHLLSHQKNFKKDSIFSTGLKEVFCKFTSGYKPSEHVTKLFDAICNCNGFNPTEINNSSEQLVSNAKSFTKEDLNSFLSKTNNDNKGYDYYSRINAIGIYKLVSEMPLFKEVKEEDLNKEINDISKSLGYQYSRVEKDISMYKSNIEKMKQALEIIALNLKTK</sequence>
<protein>
    <recommendedName>
        <fullName evidence="1">Protein Thf1</fullName>
    </recommendedName>
</protein>
<dbReference type="EMBL" id="CP000553">
    <property type="protein sequence ID" value="ABM75521.1"/>
    <property type="molecule type" value="Genomic_DNA"/>
</dbReference>
<dbReference type="RefSeq" id="WP_011823651.1">
    <property type="nucleotide sequence ID" value="NC_008819.1"/>
</dbReference>
<dbReference type="SMR" id="A2C211"/>
<dbReference type="KEGG" id="pme:NATL1_09631"/>
<dbReference type="eggNOG" id="ENOG5033PEZ">
    <property type="taxonomic scope" value="Bacteria"/>
</dbReference>
<dbReference type="HOGENOM" id="CLU_079763_1_0_3"/>
<dbReference type="Proteomes" id="UP000002592">
    <property type="component" value="Chromosome"/>
</dbReference>
<dbReference type="GO" id="GO:0030096">
    <property type="term" value="C:plasma membrane-derived thylakoid photosystem II"/>
    <property type="evidence" value="ECO:0007669"/>
    <property type="project" value="TreeGrafter"/>
</dbReference>
<dbReference type="GO" id="GO:0010207">
    <property type="term" value="P:photosystem II assembly"/>
    <property type="evidence" value="ECO:0007669"/>
    <property type="project" value="InterPro"/>
</dbReference>
<dbReference type="HAMAP" id="MF_01843">
    <property type="entry name" value="Thf1"/>
    <property type="match status" value="1"/>
</dbReference>
<dbReference type="InterPro" id="IPR017499">
    <property type="entry name" value="Thf1"/>
</dbReference>
<dbReference type="NCBIfam" id="TIGR03060">
    <property type="entry name" value="PS_II_psb29"/>
    <property type="match status" value="1"/>
</dbReference>
<dbReference type="PANTHER" id="PTHR34793">
    <property type="entry name" value="PROTEIN THYLAKOID FORMATION 1, CHLOROPLASTIC"/>
    <property type="match status" value="1"/>
</dbReference>
<dbReference type="PANTHER" id="PTHR34793:SF1">
    <property type="entry name" value="PROTEIN THYLAKOID FORMATION 1, CHLOROPLASTIC"/>
    <property type="match status" value="1"/>
</dbReference>
<dbReference type="Pfam" id="PF11264">
    <property type="entry name" value="ThylakoidFormat"/>
    <property type="match status" value="1"/>
</dbReference>
<feature type="chain" id="PRO_1000070578" description="Protein Thf1">
    <location>
        <begin position="1"/>
        <end position="199"/>
    </location>
</feature>
<feature type="coiled-coil region" evidence="1">
    <location>
        <begin position="167"/>
        <end position="198"/>
    </location>
</feature>
<comment type="function">
    <text evidence="1">May be involved in photosynthetic membrane biogenesis.</text>
</comment>
<comment type="similarity">
    <text evidence="1">Belongs to the THF1 family.</text>
</comment>
<evidence type="ECO:0000255" key="1">
    <source>
        <dbReference type="HAMAP-Rule" id="MF_01843"/>
    </source>
</evidence>
<reference key="1">
    <citation type="journal article" date="2007" name="PLoS Genet.">
        <title>Patterns and implications of gene gain and loss in the evolution of Prochlorococcus.</title>
        <authorList>
            <person name="Kettler G.C."/>
            <person name="Martiny A.C."/>
            <person name="Huang K."/>
            <person name="Zucker J."/>
            <person name="Coleman M.L."/>
            <person name="Rodrigue S."/>
            <person name="Chen F."/>
            <person name="Lapidus A."/>
            <person name="Ferriera S."/>
            <person name="Johnson J."/>
            <person name="Steglich C."/>
            <person name="Church G.M."/>
            <person name="Richardson P."/>
            <person name="Chisholm S.W."/>
        </authorList>
    </citation>
    <scope>NUCLEOTIDE SEQUENCE [LARGE SCALE GENOMIC DNA]</scope>
    <source>
        <strain>NATL1A</strain>
    </source>
</reference>
<name>THF1_PROM1</name>
<organism>
    <name type="scientific">Prochlorococcus marinus (strain NATL1A)</name>
    <dbReference type="NCBI Taxonomy" id="167555"/>
    <lineage>
        <taxon>Bacteria</taxon>
        <taxon>Bacillati</taxon>
        <taxon>Cyanobacteriota</taxon>
        <taxon>Cyanophyceae</taxon>
        <taxon>Synechococcales</taxon>
        <taxon>Prochlorococcaceae</taxon>
        <taxon>Prochlorococcus</taxon>
    </lineage>
</organism>